<accession>Q5HFZ8</accession>
<comment type="function">
    <text evidence="1">May bind long-chain fatty acids, such as palmitate, and may play a role in lipid transport or fatty acid metabolism.</text>
</comment>
<dbReference type="EMBL" id="CP000046">
    <property type="protein sequence ID" value="AAW36661.1"/>
    <property type="molecule type" value="Genomic_DNA"/>
</dbReference>
<dbReference type="SMR" id="Q5HFZ8"/>
<dbReference type="KEGG" id="sac:SACOL1460"/>
<dbReference type="HOGENOM" id="CLU_048251_3_2_9"/>
<dbReference type="Proteomes" id="UP000000530">
    <property type="component" value="Chromosome"/>
</dbReference>
<dbReference type="GO" id="GO:0008289">
    <property type="term" value="F:lipid binding"/>
    <property type="evidence" value="ECO:0007669"/>
    <property type="project" value="UniProtKB-KW"/>
</dbReference>
<dbReference type="Gene3D" id="3.30.1180.10">
    <property type="match status" value="1"/>
</dbReference>
<dbReference type="Gene3D" id="3.40.50.10170">
    <property type="match status" value="1"/>
</dbReference>
<dbReference type="InterPro" id="IPR003797">
    <property type="entry name" value="DegV"/>
</dbReference>
<dbReference type="InterPro" id="IPR043168">
    <property type="entry name" value="DegV_C"/>
</dbReference>
<dbReference type="InterPro" id="IPR050270">
    <property type="entry name" value="DegV_domain_contain"/>
</dbReference>
<dbReference type="NCBIfam" id="TIGR00762">
    <property type="entry name" value="DegV"/>
    <property type="match status" value="1"/>
</dbReference>
<dbReference type="PANTHER" id="PTHR33434">
    <property type="entry name" value="DEGV DOMAIN-CONTAINING PROTEIN DR_1986-RELATED"/>
    <property type="match status" value="1"/>
</dbReference>
<dbReference type="PANTHER" id="PTHR33434:SF8">
    <property type="entry name" value="DEGV DOMAIN-CONTAINING PROTEIN SPR1019"/>
    <property type="match status" value="1"/>
</dbReference>
<dbReference type="Pfam" id="PF02645">
    <property type="entry name" value="DegV"/>
    <property type="match status" value="1"/>
</dbReference>
<dbReference type="SUPFAM" id="SSF82549">
    <property type="entry name" value="DAK1/DegV-like"/>
    <property type="match status" value="1"/>
</dbReference>
<dbReference type="PROSITE" id="PS51482">
    <property type="entry name" value="DEGV"/>
    <property type="match status" value="1"/>
</dbReference>
<protein>
    <recommendedName>
        <fullName>DegV domain-containing protein SACOL1460</fullName>
    </recommendedName>
</protein>
<keyword id="KW-0446">Lipid-binding</keyword>
<evidence type="ECO:0000250" key="1"/>
<evidence type="ECO:0000250" key="2">
    <source>
        <dbReference type="UniProtKB" id="Q9X1H9"/>
    </source>
</evidence>
<evidence type="ECO:0000255" key="3">
    <source>
        <dbReference type="PROSITE-ProRule" id="PRU00815"/>
    </source>
</evidence>
<gene>
    <name type="ordered locus">SACOL1460</name>
</gene>
<organism>
    <name type="scientific">Staphylococcus aureus (strain COL)</name>
    <dbReference type="NCBI Taxonomy" id="93062"/>
    <lineage>
        <taxon>Bacteria</taxon>
        <taxon>Bacillati</taxon>
        <taxon>Bacillota</taxon>
        <taxon>Bacilli</taxon>
        <taxon>Bacillales</taxon>
        <taxon>Staphylococcaceae</taxon>
        <taxon>Staphylococcus</taxon>
    </lineage>
</organism>
<name>Y1460_STAAC</name>
<proteinExistence type="inferred from homology"/>
<reference key="1">
    <citation type="journal article" date="2005" name="J. Bacteriol.">
        <title>Insights on evolution of virulence and resistance from the complete genome analysis of an early methicillin-resistant Staphylococcus aureus strain and a biofilm-producing methicillin-resistant Staphylococcus epidermidis strain.</title>
        <authorList>
            <person name="Gill S.R."/>
            <person name="Fouts D.E."/>
            <person name="Archer G.L."/>
            <person name="Mongodin E.F."/>
            <person name="DeBoy R.T."/>
            <person name="Ravel J."/>
            <person name="Paulsen I.T."/>
            <person name="Kolonay J.F."/>
            <person name="Brinkac L.M."/>
            <person name="Beanan M.J."/>
            <person name="Dodson R.J."/>
            <person name="Daugherty S.C."/>
            <person name="Madupu R."/>
            <person name="Angiuoli S.V."/>
            <person name="Durkin A.S."/>
            <person name="Haft D.H."/>
            <person name="Vamathevan J.J."/>
            <person name="Khouri H."/>
            <person name="Utterback T.R."/>
            <person name="Lee C."/>
            <person name="Dimitrov G."/>
            <person name="Jiang L."/>
            <person name="Qin H."/>
            <person name="Weidman J."/>
            <person name="Tran K."/>
            <person name="Kang K.H."/>
            <person name="Hance I.R."/>
            <person name="Nelson K.E."/>
            <person name="Fraser C.M."/>
        </authorList>
    </citation>
    <scope>NUCLEOTIDE SEQUENCE [LARGE SCALE GENOMIC DNA]</scope>
    <source>
        <strain>COL</strain>
    </source>
</reference>
<feature type="chain" id="PRO_0000209787" description="DegV domain-containing protein SACOL1460">
    <location>
        <begin position="1"/>
        <end position="279"/>
    </location>
</feature>
<feature type="domain" description="DegV" evidence="3">
    <location>
        <begin position="4"/>
        <end position="278"/>
    </location>
</feature>
<feature type="binding site" evidence="2">
    <location>
        <position position="61"/>
    </location>
    <ligand>
        <name>hexadecanoate</name>
        <dbReference type="ChEBI" id="CHEBI:7896"/>
    </ligand>
</feature>
<feature type="binding site" evidence="2">
    <location>
        <position position="93"/>
    </location>
    <ligand>
        <name>hexadecanoate</name>
        <dbReference type="ChEBI" id="CHEBI:7896"/>
    </ligand>
</feature>
<sequence>MTKQIIVTDSTSDLSKEYLEANNIHVIPLSLTIEGASYVDQVDITSEEFINHIENDEDVKTSQPAIGEFISAYEELGKDGSEIISIHLSSGLSGTYNTAYQASQMVDANVTVIDSKSISFGLGYQIQHLVELVKEGVSTSEIVKKLNHLRENIKLFVVIGQLNQLIKGGRISKTKGLIGNLMKIKPIGTLDDGRLELVHNARTQNSSIQYLKKEIAEFIGDHEIKSIGVAHANVIEYVDKLKKVFNEAFHVNNYDINVTTPVISAHTGQGAIGLVVLKK</sequence>